<proteinExistence type="evidence at protein level"/>
<reference key="1">
    <citation type="journal article" date="2002" name="Nature">
        <title>The genome sequence of Schizosaccharomyces pombe.</title>
        <authorList>
            <person name="Wood V."/>
            <person name="Gwilliam R."/>
            <person name="Rajandream M.A."/>
            <person name="Lyne M.H."/>
            <person name="Lyne R."/>
            <person name="Stewart A."/>
            <person name="Sgouros J.G."/>
            <person name="Peat N."/>
            <person name="Hayles J."/>
            <person name="Baker S.G."/>
            <person name="Basham D."/>
            <person name="Bowman S."/>
            <person name="Brooks K."/>
            <person name="Brown D."/>
            <person name="Brown S."/>
            <person name="Chillingworth T."/>
            <person name="Churcher C.M."/>
            <person name="Collins M."/>
            <person name="Connor R."/>
            <person name="Cronin A."/>
            <person name="Davis P."/>
            <person name="Feltwell T."/>
            <person name="Fraser A."/>
            <person name="Gentles S."/>
            <person name="Goble A."/>
            <person name="Hamlin N."/>
            <person name="Harris D.E."/>
            <person name="Hidalgo J."/>
            <person name="Hodgson G."/>
            <person name="Holroyd S."/>
            <person name="Hornsby T."/>
            <person name="Howarth S."/>
            <person name="Huckle E.J."/>
            <person name="Hunt S."/>
            <person name="Jagels K."/>
            <person name="James K.D."/>
            <person name="Jones L."/>
            <person name="Jones M."/>
            <person name="Leather S."/>
            <person name="McDonald S."/>
            <person name="McLean J."/>
            <person name="Mooney P."/>
            <person name="Moule S."/>
            <person name="Mungall K.L."/>
            <person name="Murphy L.D."/>
            <person name="Niblett D."/>
            <person name="Odell C."/>
            <person name="Oliver K."/>
            <person name="O'Neil S."/>
            <person name="Pearson D."/>
            <person name="Quail M.A."/>
            <person name="Rabbinowitsch E."/>
            <person name="Rutherford K.M."/>
            <person name="Rutter S."/>
            <person name="Saunders D."/>
            <person name="Seeger K."/>
            <person name="Sharp S."/>
            <person name="Skelton J."/>
            <person name="Simmonds M.N."/>
            <person name="Squares R."/>
            <person name="Squares S."/>
            <person name="Stevens K."/>
            <person name="Taylor K."/>
            <person name="Taylor R.G."/>
            <person name="Tivey A."/>
            <person name="Walsh S.V."/>
            <person name="Warren T."/>
            <person name="Whitehead S."/>
            <person name="Woodward J.R."/>
            <person name="Volckaert G."/>
            <person name="Aert R."/>
            <person name="Robben J."/>
            <person name="Grymonprez B."/>
            <person name="Weltjens I."/>
            <person name="Vanstreels E."/>
            <person name="Rieger M."/>
            <person name="Schaefer M."/>
            <person name="Mueller-Auer S."/>
            <person name="Gabel C."/>
            <person name="Fuchs M."/>
            <person name="Duesterhoeft A."/>
            <person name="Fritzc C."/>
            <person name="Holzer E."/>
            <person name="Moestl D."/>
            <person name="Hilbert H."/>
            <person name="Borzym K."/>
            <person name="Langer I."/>
            <person name="Beck A."/>
            <person name="Lehrach H."/>
            <person name="Reinhardt R."/>
            <person name="Pohl T.M."/>
            <person name="Eger P."/>
            <person name="Zimmermann W."/>
            <person name="Wedler H."/>
            <person name="Wambutt R."/>
            <person name="Purnelle B."/>
            <person name="Goffeau A."/>
            <person name="Cadieu E."/>
            <person name="Dreano S."/>
            <person name="Gloux S."/>
            <person name="Lelaure V."/>
            <person name="Mottier S."/>
            <person name="Galibert F."/>
            <person name="Aves S.J."/>
            <person name="Xiang Z."/>
            <person name="Hunt C."/>
            <person name="Moore K."/>
            <person name="Hurst S.M."/>
            <person name="Lucas M."/>
            <person name="Rochet M."/>
            <person name="Gaillardin C."/>
            <person name="Tallada V.A."/>
            <person name="Garzon A."/>
            <person name="Thode G."/>
            <person name="Daga R.R."/>
            <person name="Cruzado L."/>
            <person name="Jimenez J."/>
            <person name="Sanchez M."/>
            <person name="del Rey F."/>
            <person name="Benito J."/>
            <person name="Dominguez A."/>
            <person name="Revuelta J.L."/>
            <person name="Moreno S."/>
            <person name="Armstrong J."/>
            <person name="Forsburg S.L."/>
            <person name="Cerutti L."/>
            <person name="Lowe T."/>
            <person name="McCombie W.R."/>
            <person name="Paulsen I."/>
            <person name="Potashkin J."/>
            <person name="Shpakovski G.V."/>
            <person name="Ussery D."/>
            <person name="Barrell B.G."/>
            <person name="Nurse P."/>
        </authorList>
    </citation>
    <scope>NUCLEOTIDE SEQUENCE [LARGE SCALE GENOMIC DNA]</scope>
    <source>
        <strain>972 / ATCC 24843</strain>
    </source>
</reference>
<reference key="2">
    <citation type="journal article" date="2005" name="Curr. Biol.">
        <title>A large-scale screen in S. pombe identifies seven novel genes required for critical meiotic events.</title>
        <authorList>
            <person name="Martin-Castellanos C."/>
            <person name="Blanco M."/>
            <person name="Rozalen A.E."/>
            <person name="Perez-Hidalgo L."/>
            <person name="Garcia A.I."/>
            <person name="Conde F."/>
            <person name="Mata J."/>
            <person name="Ellermeier C."/>
            <person name="Davis L."/>
            <person name="San-Segundo P."/>
            <person name="Smith G.R."/>
            <person name="Moreno S."/>
        </authorList>
    </citation>
    <scope>FUNCTION IN MEIOSIS</scope>
</reference>
<reference key="3">
    <citation type="journal article" date="2006" name="Nat. Biotechnol.">
        <title>ORFeome cloning and global analysis of protein localization in the fission yeast Schizosaccharomyces pombe.</title>
        <authorList>
            <person name="Matsuyama A."/>
            <person name="Arai R."/>
            <person name="Yashiroda Y."/>
            <person name="Shirai A."/>
            <person name="Kamata A."/>
            <person name="Sekido S."/>
            <person name="Kobayashi Y."/>
            <person name="Hashimoto A."/>
            <person name="Hamamoto M."/>
            <person name="Hiraoka Y."/>
            <person name="Horinouchi S."/>
            <person name="Yoshida M."/>
        </authorList>
    </citation>
    <scope>SUBCELLULAR LOCATION [LARGE SCALE ANALYSIS]</scope>
</reference>
<name>MU138_SCHPO</name>
<protein>
    <recommendedName>
        <fullName>Putative zinc protease mug138</fullName>
        <ecNumber>3.4.24.-</ecNumber>
    </recommendedName>
    <alternativeName>
        <fullName>Meiotically up-regulated gene 138 protein</fullName>
    </alternativeName>
</protein>
<comment type="function">
    <text evidence="2">Has a role in meiosis.</text>
</comment>
<comment type="subcellular location">
    <subcellularLocation>
        <location evidence="3">Cytoplasm</location>
    </subcellularLocation>
</comment>
<comment type="similarity">
    <text evidence="4">Belongs to the peptidase M16 family.</text>
</comment>
<organism>
    <name type="scientific">Schizosaccharomyces pombe (strain 972 / ATCC 24843)</name>
    <name type="common">Fission yeast</name>
    <dbReference type="NCBI Taxonomy" id="284812"/>
    <lineage>
        <taxon>Eukaryota</taxon>
        <taxon>Fungi</taxon>
        <taxon>Dikarya</taxon>
        <taxon>Ascomycota</taxon>
        <taxon>Taphrinomycotina</taxon>
        <taxon>Schizosaccharomycetes</taxon>
        <taxon>Schizosaccharomycetales</taxon>
        <taxon>Schizosaccharomycetaceae</taxon>
        <taxon>Schizosaccharomyces</taxon>
    </lineage>
</organism>
<gene>
    <name type="primary">mug138</name>
    <name type="ORF">SPAC2E11.12c</name>
    <name type="ORF">SPACUNK4.12c</name>
</gene>
<feature type="chain" id="PRO_0000074429" description="Putative zinc protease mug138">
    <location>
        <begin position="1"/>
        <end position="969"/>
    </location>
</feature>
<feature type="active site" description="Proton acceptor" evidence="1">
    <location>
        <position position="71"/>
    </location>
</feature>
<feature type="binding site" evidence="1">
    <location>
        <position position="68"/>
    </location>
    <ligand>
        <name>Zn(2+)</name>
        <dbReference type="ChEBI" id="CHEBI:29105"/>
    </ligand>
</feature>
<feature type="binding site" evidence="1">
    <location>
        <position position="72"/>
    </location>
    <ligand>
        <name>Zn(2+)</name>
        <dbReference type="ChEBI" id="CHEBI:29105"/>
    </ligand>
</feature>
<feature type="binding site" evidence="1">
    <location>
        <position position="149"/>
    </location>
    <ligand>
        <name>Zn(2+)</name>
        <dbReference type="ChEBI" id="CHEBI:29105"/>
    </ligand>
</feature>
<sequence length="969" mass="112145">MDGKPQVEVIVNGQVVPNLDDREYRLIKLENDLEVLLVRDPETDNASAAIDVHIGSQSNPRELLGLAHFCEHLLFMGTKKYPDENEYRKYLESHNGISNAYTASNNTNYYFEVSHDALYGALDRFAQFFIDPLFLEECKDREIRAVDSEHCKNLQSDSWRFWRLYSVLSNPKSVFSKFNTGNIETLGDVPKELGLDVRQELLKFYDKYYSANIMKLVIIGREPLDVLQDWAAELFSPIKNKAVPIPKFPDPPYTDNEVRKICYVKPVKNLRRLDIVFPIPGQYHKYKCRPAEYVCHLLGHEGEGSYLAYLKSLGLATSLIAFNVSITEDADIIVVSTFLTEEGLTDYQRVIKILFEYIRLLDQTNAHKFLFEETRIMSEAQFKTRQKTPAYQYAHVVASKLQREYPRDKVLYYSSVLTEFDPKGIQEVVESLRPNNFFAILAAHSIEKGLDNKEKFYGIDYGLEDLDSQFIDSLLHIKTSSELYLPLANEFIPWSLEVEKQPVTTKLKVPNLVRNDKFVRLWHKKDDTFWVPKANVFINFISPIARRSPKVSVSTTLYTRLIEDALGEYSYPASLAGLSFSLSPSTRGIILCISGFTDKLHVLLEKVVAMMRDLKVHPQRFEILKNRLEQELKDYDALEAYHRSNHVLTWLSEPHSWSNAELREAIKDVQVGDMSDFISDLLKQNFLESLVHGNYTEEDAKNLIESAQKLIDPKPVFASQLSRKRAIIVPEGGNYIYKTVVPNKEEKNSAIMYNLQISQLDDERSGALTRLARQIMKEPTFSILRTKEQLGYIVFTLVRQVTPFINLNIFVQSERSSTYLESRIRALLDQFKSEFLEMSDEDFSKHKSSLINFMLEKHTNLKEESSMYWLRICDGFYDFTRLEKQAEIVSTITKDEFYSFFINNIHYEGENTKKISVHVVSQRCEDEVYEIPNVTIIENGNMFKESMTLSKAAFPLKPFDEIDRSLLFN</sequence>
<keyword id="KW-0963">Cytoplasm</keyword>
<keyword id="KW-0378">Hydrolase</keyword>
<keyword id="KW-0469">Meiosis</keyword>
<keyword id="KW-0479">Metal-binding</keyword>
<keyword id="KW-0482">Metalloprotease</keyword>
<keyword id="KW-0645">Protease</keyword>
<keyword id="KW-1185">Reference proteome</keyword>
<keyword id="KW-0862">Zinc</keyword>
<accession>O14077</accession>
<dbReference type="EC" id="3.4.24.-"/>
<dbReference type="EMBL" id="CU329670">
    <property type="protein sequence ID" value="CAA20142.1"/>
    <property type="molecule type" value="Genomic_DNA"/>
</dbReference>
<dbReference type="PIR" id="T41707">
    <property type="entry name" value="T41707"/>
</dbReference>
<dbReference type="RefSeq" id="NP_593966.1">
    <property type="nucleotide sequence ID" value="NM_001019393.2"/>
</dbReference>
<dbReference type="SMR" id="O14077"/>
<dbReference type="BioGRID" id="278898">
    <property type="interactions" value="2"/>
</dbReference>
<dbReference type="FunCoup" id="O14077">
    <property type="interactions" value="489"/>
</dbReference>
<dbReference type="STRING" id="284812.O14077"/>
<dbReference type="MEROPS" id="M16.020"/>
<dbReference type="PaxDb" id="4896-SPACUNK4.12c.1"/>
<dbReference type="EnsemblFungi" id="SPACUNK4.12c.1">
    <property type="protein sequence ID" value="SPACUNK4.12c.1:pep"/>
    <property type="gene ID" value="SPACUNK4.12c"/>
</dbReference>
<dbReference type="GeneID" id="2542436"/>
<dbReference type="KEGG" id="spo:2542436"/>
<dbReference type="PomBase" id="SPACUNK4.12c"/>
<dbReference type="VEuPathDB" id="FungiDB:SPACUNK4.12c"/>
<dbReference type="eggNOG" id="KOG0959">
    <property type="taxonomic scope" value="Eukaryota"/>
</dbReference>
<dbReference type="HOGENOM" id="CLU_004639_1_1_1"/>
<dbReference type="InParanoid" id="O14077"/>
<dbReference type="OMA" id="WIFDEMK"/>
<dbReference type="PhylomeDB" id="O14077"/>
<dbReference type="Reactome" id="R-SPO-5689880">
    <property type="pathway name" value="Ub-specific processing proteases"/>
</dbReference>
<dbReference type="Reactome" id="R-SPO-9033241">
    <property type="pathway name" value="Peroxisomal protein import"/>
</dbReference>
<dbReference type="PRO" id="PR:O14077"/>
<dbReference type="Proteomes" id="UP000002485">
    <property type="component" value="Chromosome I"/>
</dbReference>
<dbReference type="GO" id="GO:0005829">
    <property type="term" value="C:cytosol"/>
    <property type="evidence" value="ECO:0007005"/>
    <property type="project" value="PomBase"/>
</dbReference>
<dbReference type="GO" id="GO:0005739">
    <property type="term" value="C:mitochondrion"/>
    <property type="evidence" value="ECO:0000318"/>
    <property type="project" value="GO_Central"/>
</dbReference>
<dbReference type="GO" id="GO:0046872">
    <property type="term" value="F:metal ion binding"/>
    <property type="evidence" value="ECO:0007669"/>
    <property type="project" value="UniProtKB-KW"/>
</dbReference>
<dbReference type="GO" id="GO:0004222">
    <property type="term" value="F:metalloendopeptidase activity"/>
    <property type="evidence" value="ECO:0000318"/>
    <property type="project" value="GO_Central"/>
</dbReference>
<dbReference type="GO" id="GO:0051321">
    <property type="term" value="P:meiotic cell cycle"/>
    <property type="evidence" value="ECO:0007669"/>
    <property type="project" value="UniProtKB-KW"/>
</dbReference>
<dbReference type="GO" id="GO:0034982">
    <property type="term" value="P:mitochondrial protein processing"/>
    <property type="evidence" value="ECO:0000303"/>
    <property type="project" value="PomBase"/>
</dbReference>
<dbReference type="GO" id="GO:0043171">
    <property type="term" value="P:peptide catabolic process"/>
    <property type="evidence" value="ECO:0000318"/>
    <property type="project" value="GO_Central"/>
</dbReference>
<dbReference type="GO" id="GO:0051603">
    <property type="term" value="P:proteolysis involved in protein catabolic process"/>
    <property type="evidence" value="ECO:0000318"/>
    <property type="project" value="GO_Central"/>
</dbReference>
<dbReference type="FunFam" id="3.30.830.10:FF:000003">
    <property type="entry name" value="Insulin-degrading enzyme"/>
    <property type="match status" value="1"/>
</dbReference>
<dbReference type="FunFam" id="3.30.830.10:FF:000005">
    <property type="entry name" value="nardilysin isoform X1"/>
    <property type="match status" value="1"/>
</dbReference>
<dbReference type="FunFam" id="3.30.830.10:FF:000004">
    <property type="entry name" value="Putative insulin-degrading enzyme"/>
    <property type="match status" value="1"/>
</dbReference>
<dbReference type="FunFam" id="3.30.830.10:FF:000066">
    <property type="entry name" value="Putative zinc protease mug138"/>
    <property type="match status" value="1"/>
</dbReference>
<dbReference type="Gene3D" id="3.30.830.10">
    <property type="entry name" value="Metalloenzyme, LuxS/M16 peptidase-like"/>
    <property type="match status" value="4"/>
</dbReference>
<dbReference type="InterPro" id="IPR011249">
    <property type="entry name" value="Metalloenz_LuxS/M16"/>
</dbReference>
<dbReference type="InterPro" id="IPR011765">
    <property type="entry name" value="Pept_M16_N"/>
</dbReference>
<dbReference type="InterPro" id="IPR001431">
    <property type="entry name" value="Pept_M16_Zn_BS"/>
</dbReference>
<dbReference type="InterPro" id="IPR050626">
    <property type="entry name" value="Peptidase_M16"/>
</dbReference>
<dbReference type="InterPro" id="IPR007863">
    <property type="entry name" value="Peptidase_M16_C"/>
</dbReference>
<dbReference type="InterPro" id="IPR032632">
    <property type="entry name" value="Peptidase_M16_M"/>
</dbReference>
<dbReference type="InterPro" id="IPR054734">
    <property type="entry name" value="PqqF-like_C_4"/>
</dbReference>
<dbReference type="PANTHER" id="PTHR43690:SF18">
    <property type="entry name" value="INSULIN-DEGRADING ENZYME-RELATED"/>
    <property type="match status" value="1"/>
</dbReference>
<dbReference type="PANTHER" id="PTHR43690">
    <property type="entry name" value="NARDILYSIN"/>
    <property type="match status" value="1"/>
</dbReference>
<dbReference type="Pfam" id="PF00675">
    <property type="entry name" value="Peptidase_M16"/>
    <property type="match status" value="1"/>
</dbReference>
<dbReference type="Pfam" id="PF05193">
    <property type="entry name" value="Peptidase_M16_C"/>
    <property type="match status" value="1"/>
</dbReference>
<dbReference type="Pfam" id="PF16187">
    <property type="entry name" value="Peptidase_M16_M"/>
    <property type="match status" value="1"/>
</dbReference>
<dbReference type="Pfam" id="PF22456">
    <property type="entry name" value="PqqF-like_C_4"/>
    <property type="match status" value="1"/>
</dbReference>
<dbReference type="SUPFAM" id="SSF63411">
    <property type="entry name" value="LuxS/MPP-like metallohydrolase"/>
    <property type="match status" value="4"/>
</dbReference>
<dbReference type="PROSITE" id="PS00143">
    <property type="entry name" value="INSULINASE"/>
    <property type="match status" value="1"/>
</dbReference>
<evidence type="ECO:0000255" key="1">
    <source>
        <dbReference type="PROSITE-ProRule" id="PRU10096"/>
    </source>
</evidence>
<evidence type="ECO:0000269" key="2">
    <source>
    </source>
</evidence>
<evidence type="ECO:0000269" key="3">
    <source>
    </source>
</evidence>
<evidence type="ECO:0000305" key="4"/>